<feature type="chain" id="PRO_1000067933" description="Small ribosomal subunit protein uS14">
    <location>
        <begin position="1"/>
        <end position="61"/>
    </location>
</feature>
<feature type="binding site" evidence="1">
    <location>
        <position position="24"/>
    </location>
    <ligand>
        <name>Zn(2+)</name>
        <dbReference type="ChEBI" id="CHEBI:29105"/>
    </ligand>
</feature>
<feature type="binding site" evidence="1">
    <location>
        <position position="27"/>
    </location>
    <ligand>
        <name>Zn(2+)</name>
        <dbReference type="ChEBI" id="CHEBI:29105"/>
    </ligand>
</feature>
<feature type="binding site" evidence="1">
    <location>
        <position position="40"/>
    </location>
    <ligand>
        <name>Zn(2+)</name>
        <dbReference type="ChEBI" id="CHEBI:29105"/>
    </ligand>
</feature>
<feature type="binding site" evidence="1">
    <location>
        <position position="43"/>
    </location>
    <ligand>
        <name>Zn(2+)</name>
        <dbReference type="ChEBI" id="CHEBI:29105"/>
    </ligand>
</feature>
<dbReference type="EMBL" id="CP000538">
    <property type="protein sequence ID" value="EAQ72551.1"/>
    <property type="molecule type" value="Genomic_DNA"/>
</dbReference>
<dbReference type="RefSeq" id="WP_002851478.1">
    <property type="nucleotide sequence ID" value="NC_008787.1"/>
</dbReference>
<dbReference type="SMR" id="A1W1U7"/>
<dbReference type="KEGG" id="cjj:CJJ81176_1691"/>
<dbReference type="eggNOG" id="COG0199">
    <property type="taxonomic scope" value="Bacteria"/>
</dbReference>
<dbReference type="HOGENOM" id="CLU_139869_3_0_7"/>
<dbReference type="Proteomes" id="UP000000646">
    <property type="component" value="Chromosome"/>
</dbReference>
<dbReference type="GO" id="GO:0005737">
    <property type="term" value="C:cytoplasm"/>
    <property type="evidence" value="ECO:0007669"/>
    <property type="project" value="UniProtKB-ARBA"/>
</dbReference>
<dbReference type="GO" id="GO:0015935">
    <property type="term" value="C:small ribosomal subunit"/>
    <property type="evidence" value="ECO:0007669"/>
    <property type="project" value="TreeGrafter"/>
</dbReference>
<dbReference type="GO" id="GO:0019843">
    <property type="term" value="F:rRNA binding"/>
    <property type="evidence" value="ECO:0007669"/>
    <property type="project" value="UniProtKB-UniRule"/>
</dbReference>
<dbReference type="GO" id="GO:0003735">
    <property type="term" value="F:structural constituent of ribosome"/>
    <property type="evidence" value="ECO:0007669"/>
    <property type="project" value="InterPro"/>
</dbReference>
<dbReference type="GO" id="GO:0008270">
    <property type="term" value="F:zinc ion binding"/>
    <property type="evidence" value="ECO:0007669"/>
    <property type="project" value="UniProtKB-UniRule"/>
</dbReference>
<dbReference type="GO" id="GO:0006412">
    <property type="term" value="P:translation"/>
    <property type="evidence" value="ECO:0007669"/>
    <property type="project" value="UniProtKB-UniRule"/>
</dbReference>
<dbReference type="FunFam" id="4.10.830.10:FF:000001">
    <property type="entry name" value="30S ribosomal protein S14 type Z"/>
    <property type="match status" value="1"/>
</dbReference>
<dbReference type="Gene3D" id="4.10.830.10">
    <property type="entry name" value="30s Ribosomal Protein S14, Chain N"/>
    <property type="match status" value="1"/>
</dbReference>
<dbReference type="HAMAP" id="MF_01364_B">
    <property type="entry name" value="Ribosomal_uS14_2_B"/>
    <property type="match status" value="1"/>
</dbReference>
<dbReference type="InterPro" id="IPR001209">
    <property type="entry name" value="Ribosomal_uS14"/>
</dbReference>
<dbReference type="InterPro" id="IPR023053">
    <property type="entry name" value="Ribosomal_uS14_bact"/>
</dbReference>
<dbReference type="InterPro" id="IPR018271">
    <property type="entry name" value="Ribosomal_uS14_CS"/>
</dbReference>
<dbReference type="InterPro" id="IPR043140">
    <property type="entry name" value="Ribosomal_uS14_sf"/>
</dbReference>
<dbReference type="NCBIfam" id="NF005974">
    <property type="entry name" value="PRK08061.1"/>
    <property type="match status" value="1"/>
</dbReference>
<dbReference type="PANTHER" id="PTHR19836">
    <property type="entry name" value="30S RIBOSOMAL PROTEIN S14"/>
    <property type="match status" value="1"/>
</dbReference>
<dbReference type="PANTHER" id="PTHR19836:SF19">
    <property type="entry name" value="SMALL RIBOSOMAL SUBUNIT PROTEIN US14M"/>
    <property type="match status" value="1"/>
</dbReference>
<dbReference type="Pfam" id="PF00253">
    <property type="entry name" value="Ribosomal_S14"/>
    <property type="match status" value="1"/>
</dbReference>
<dbReference type="SUPFAM" id="SSF57716">
    <property type="entry name" value="Glucocorticoid receptor-like (DNA-binding domain)"/>
    <property type="match status" value="1"/>
</dbReference>
<dbReference type="PROSITE" id="PS00527">
    <property type="entry name" value="RIBOSOMAL_S14"/>
    <property type="match status" value="1"/>
</dbReference>
<accession>A1W1U7</accession>
<gene>
    <name evidence="1" type="primary">rpsZ</name>
    <name evidence="1" type="synonym">rpsN</name>
    <name type="ordered locus">CJJ81176_1691</name>
</gene>
<organism>
    <name type="scientific">Campylobacter jejuni subsp. jejuni serotype O:23/36 (strain 81-176)</name>
    <dbReference type="NCBI Taxonomy" id="354242"/>
    <lineage>
        <taxon>Bacteria</taxon>
        <taxon>Pseudomonadati</taxon>
        <taxon>Campylobacterota</taxon>
        <taxon>Epsilonproteobacteria</taxon>
        <taxon>Campylobacterales</taxon>
        <taxon>Campylobacteraceae</taxon>
        <taxon>Campylobacter</taxon>
    </lineage>
</organism>
<sequence length="61" mass="6956">MAKKSMIAKAARKPKFKVRAYTRCQICGRPHSVYRDFGICRVCLRKMGNEGLIPGLKKASW</sequence>
<keyword id="KW-0479">Metal-binding</keyword>
<keyword id="KW-0687">Ribonucleoprotein</keyword>
<keyword id="KW-0689">Ribosomal protein</keyword>
<keyword id="KW-0694">RNA-binding</keyword>
<keyword id="KW-0699">rRNA-binding</keyword>
<keyword id="KW-0862">Zinc</keyword>
<evidence type="ECO:0000255" key="1">
    <source>
        <dbReference type="HAMAP-Rule" id="MF_01364"/>
    </source>
</evidence>
<evidence type="ECO:0000305" key="2"/>
<comment type="function">
    <text evidence="1">Binds 16S rRNA, required for the assembly of 30S particles and may also be responsible for determining the conformation of the 16S rRNA at the A site.</text>
</comment>
<comment type="cofactor">
    <cofactor evidence="1">
        <name>Zn(2+)</name>
        <dbReference type="ChEBI" id="CHEBI:29105"/>
    </cofactor>
    <text evidence="1">Binds 1 zinc ion per subunit.</text>
</comment>
<comment type="subunit">
    <text evidence="1">Part of the 30S ribosomal subunit. Contacts proteins S3 and S10.</text>
</comment>
<comment type="similarity">
    <text evidence="1">Belongs to the universal ribosomal protein uS14 family. Zinc-binding uS14 subfamily.</text>
</comment>
<name>RS14Z_CAMJJ</name>
<protein>
    <recommendedName>
        <fullName evidence="1">Small ribosomal subunit protein uS14</fullName>
    </recommendedName>
    <alternativeName>
        <fullName evidence="2">30S ribosomal protein S14 type Z</fullName>
    </alternativeName>
</protein>
<reference key="1">
    <citation type="submission" date="2006-12" db="EMBL/GenBank/DDBJ databases">
        <authorList>
            <person name="Fouts D.E."/>
            <person name="Nelson K.E."/>
            <person name="Sebastian Y."/>
        </authorList>
    </citation>
    <scope>NUCLEOTIDE SEQUENCE [LARGE SCALE GENOMIC DNA]</scope>
    <source>
        <strain>81-176</strain>
    </source>
</reference>
<proteinExistence type="inferred from homology"/>